<evidence type="ECO:0000250" key="1"/>
<evidence type="ECO:0000250" key="2">
    <source>
        <dbReference type="UniProtKB" id="Q96RD7"/>
    </source>
</evidence>
<evidence type="ECO:0000250" key="3">
    <source>
        <dbReference type="UniProtKB" id="Q9JIP4"/>
    </source>
</evidence>
<evidence type="ECO:0000255" key="4"/>
<evidence type="ECO:0000255" key="5">
    <source>
        <dbReference type="PROSITE-ProRule" id="PRU00351"/>
    </source>
</evidence>
<evidence type="ECO:0000256" key="6">
    <source>
        <dbReference type="SAM" id="MobiDB-lite"/>
    </source>
</evidence>
<evidence type="ECO:0000269" key="7">
    <source>
    </source>
</evidence>
<evidence type="ECO:0000305" key="8"/>
<evidence type="ECO:0000305" key="9">
    <source>
    </source>
</evidence>
<keyword id="KW-0106">Calcium</keyword>
<keyword id="KW-0107">Calcium channel</keyword>
<keyword id="KW-0109">Calcium transport</keyword>
<keyword id="KW-1003">Cell membrane</keyword>
<keyword id="KW-1015">Disulfide bond</keyword>
<keyword id="KW-0256">Endoplasmic reticulum</keyword>
<keyword id="KW-0325">Glycoprotein</keyword>
<keyword id="KW-0407">Ion channel</keyword>
<keyword id="KW-0406">Ion transport</keyword>
<keyword id="KW-0472">Membrane</keyword>
<keyword id="KW-0597">Phosphoprotein</keyword>
<keyword id="KW-1185">Reference proteome</keyword>
<keyword id="KW-0702">S-nitrosylation</keyword>
<keyword id="KW-0812">Transmembrane</keyword>
<keyword id="KW-1133">Transmembrane helix</keyword>
<keyword id="KW-0813">Transport</keyword>
<organism>
    <name type="scientific">Rattus norvegicus</name>
    <name type="common">Rat</name>
    <dbReference type="NCBI Taxonomy" id="10116"/>
    <lineage>
        <taxon>Eukaryota</taxon>
        <taxon>Metazoa</taxon>
        <taxon>Chordata</taxon>
        <taxon>Craniata</taxon>
        <taxon>Vertebrata</taxon>
        <taxon>Euteleostomi</taxon>
        <taxon>Mammalia</taxon>
        <taxon>Eutheria</taxon>
        <taxon>Euarchontoglires</taxon>
        <taxon>Glires</taxon>
        <taxon>Rodentia</taxon>
        <taxon>Myomorpha</taxon>
        <taxon>Muroidea</taxon>
        <taxon>Muridae</taxon>
        <taxon>Murinae</taxon>
        <taxon>Rattus</taxon>
    </lineage>
</organism>
<name>PANX1_RAT</name>
<sequence>MAIAHLATEYVFSDFLLKEPTEPKFKGLRLELAVDKMVTCIAVGLPLLLISLAFAQEISIGTQISCFSPSSFSWRQAAFVDSYCWAAVQQKNSLQSESGNLPLWLHKFFPYILLLFAILLYLPALFWRFAAAPHLCSDLKFIMEELDKVYNRAIKAAKSARDLDLRDGPGPPGVTENVGQSLWEISESHFKYPIVEQYLKTKKNSSHLIMKYISCRLVTFAVVLLACIYLSYYFSLSSLSDEFLCSIKSGVLRNDSTIPDSFQCKLIAVGIFQLLSLINLLVYALLVPVVIYTLFVPFRQKTDVLKVYEILPTFDVLHFKSEGYNDLSLYNLFLEENISELKSYKCLKVLENIKSNGQGIDPMLLLTNLGMIKMDVIDGKVPMSLQTKGEDQGSQRMDFKDLDLSSETAANNGEKNSRQRLLNSSC</sequence>
<gene>
    <name type="primary">Panx1</name>
    <name type="synonym">Px1</name>
</gene>
<dbReference type="EMBL" id="AJ557015">
    <property type="protein sequence ID" value="CAD89522.1"/>
    <property type="molecule type" value="mRNA"/>
</dbReference>
<dbReference type="RefSeq" id="NP_955429.1">
    <property type="nucleotide sequence ID" value="NM_199397.2"/>
</dbReference>
<dbReference type="SMR" id="P60570"/>
<dbReference type="FunCoup" id="P60570">
    <property type="interactions" value="1407"/>
</dbReference>
<dbReference type="STRING" id="10116.ENSRNOP00000013577"/>
<dbReference type="ChEMBL" id="CHEMBL5465294"/>
<dbReference type="GlyCosmos" id="P60570">
    <property type="glycosylation" value="1 site, No reported glycans"/>
</dbReference>
<dbReference type="GlyGen" id="P60570">
    <property type="glycosylation" value="2 sites"/>
</dbReference>
<dbReference type="iPTMnet" id="P60570"/>
<dbReference type="PhosphoSitePlus" id="P60570"/>
<dbReference type="PaxDb" id="10116-ENSRNOP00000013577"/>
<dbReference type="Ensembl" id="ENSRNOT00000013577.6">
    <property type="protein sequence ID" value="ENSRNOP00000013577.3"/>
    <property type="gene ID" value="ENSRNOG00000010060.8"/>
</dbReference>
<dbReference type="GeneID" id="315435"/>
<dbReference type="KEGG" id="rno:315435"/>
<dbReference type="UCSC" id="RGD:735204">
    <property type="organism name" value="rat"/>
</dbReference>
<dbReference type="AGR" id="RGD:735204"/>
<dbReference type="CTD" id="24145"/>
<dbReference type="RGD" id="735204">
    <property type="gene designation" value="Panx1"/>
</dbReference>
<dbReference type="eggNOG" id="ENOG502QT58">
    <property type="taxonomic scope" value="Eukaryota"/>
</dbReference>
<dbReference type="GeneTree" id="ENSGT00940000153972"/>
<dbReference type="HOGENOM" id="CLU_050054_1_0_1"/>
<dbReference type="InParanoid" id="P60570"/>
<dbReference type="OMA" id="IPDRFQC"/>
<dbReference type="OrthoDB" id="5867527at2759"/>
<dbReference type="PhylomeDB" id="P60570"/>
<dbReference type="TreeFam" id="TF333142"/>
<dbReference type="Reactome" id="R-RNO-112303">
    <property type="pathway name" value="Electric Transmission Across Gap Junctions"/>
</dbReference>
<dbReference type="Reactome" id="R-RNO-844456">
    <property type="pathway name" value="The NLRP3 inflammasome"/>
</dbReference>
<dbReference type="PRO" id="PR:P60570"/>
<dbReference type="Proteomes" id="UP000002494">
    <property type="component" value="Chromosome 8"/>
</dbReference>
<dbReference type="Bgee" id="ENSRNOG00000010060">
    <property type="expression patterns" value="Expressed in jejunum and 17 other cell types or tissues"/>
</dbReference>
<dbReference type="ExpressionAtlas" id="P60570">
    <property type="expression patterns" value="baseline and differential"/>
</dbReference>
<dbReference type="GO" id="GO:0032059">
    <property type="term" value="C:bleb"/>
    <property type="evidence" value="ECO:0000266"/>
    <property type="project" value="RGD"/>
</dbReference>
<dbReference type="GO" id="GO:0005783">
    <property type="term" value="C:endoplasmic reticulum"/>
    <property type="evidence" value="ECO:0000250"/>
    <property type="project" value="UniProtKB"/>
</dbReference>
<dbReference type="GO" id="GO:0005789">
    <property type="term" value="C:endoplasmic reticulum membrane"/>
    <property type="evidence" value="ECO:0007669"/>
    <property type="project" value="UniProtKB-SubCell"/>
</dbReference>
<dbReference type="GO" id="GO:0005921">
    <property type="term" value="C:gap junction"/>
    <property type="evidence" value="ECO:0000250"/>
    <property type="project" value="UniProtKB"/>
</dbReference>
<dbReference type="GO" id="GO:0005886">
    <property type="term" value="C:plasma membrane"/>
    <property type="evidence" value="ECO:0000314"/>
    <property type="project" value="UniProtKB"/>
</dbReference>
<dbReference type="GO" id="GO:0032991">
    <property type="term" value="C:protein-containing complex"/>
    <property type="evidence" value="ECO:0000314"/>
    <property type="project" value="UniProtKB"/>
</dbReference>
<dbReference type="GO" id="GO:0003779">
    <property type="term" value="F:actin binding"/>
    <property type="evidence" value="ECO:0000266"/>
    <property type="project" value="RGD"/>
</dbReference>
<dbReference type="GO" id="GO:0051015">
    <property type="term" value="F:actin filament binding"/>
    <property type="evidence" value="ECO:0000266"/>
    <property type="project" value="RGD"/>
</dbReference>
<dbReference type="GO" id="GO:0005347">
    <property type="term" value="F:ATP transmembrane transporter activity"/>
    <property type="evidence" value="ECO:0000250"/>
    <property type="project" value="UniProtKB"/>
</dbReference>
<dbReference type="GO" id="GO:0005262">
    <property type="term" value="F:calcium channel activity"/>
    <property type="evidence" value="ECO:0000250"/>
    <property type="project" value="UniProtKB"/>
</dbReference>
<dbReference type="GO" id="GO:0005243">
    <property type="term" value="F:gap junction channel activity"/>
    <property type="evidence" value="ECO:0000315"/>
    <property type="project" value="RGD"/>
</dbReference>
<dbReference type="GO" id="GO:0022840">
    <property type="term" value="F:leak channel activity"/>
    <property type="evidence" value="ECO:0000250"/>
    <property type="project" value="UniProtKB"/>
</dbReference>
<dbReference type="GO" id="GO:0005253">
    <property type="term" value="F:monoatomic anion channel activity"/>
    <property type="evidence" value="ECO:0000250"/>
    <property type="project" value="UniProtKB"/>
</dbReference>
<dbReference type="GO" id="GO:0002020">
    <property type="term" value="F:protease binding"/>
    <property type="evidence" value="ECO:0000353"/>
    <property type="project" value="RGD"/>
</dbReference>
<dbReference type="GO" id="GO:0044877">
    <property type="term" value="F:protein-containing complex binding"/>
    <property type="evidence" value="ECO:0000315"/>
    <property type="project" value="RGD"/>
</dbReference>
<dbReference type="GO" id="GO:0097110">
    <property type="term" value="F:scaffold protein binding"/>
    <property type="evidence" value="ECO:0000353"/>
    <property type="project" value="RGD"/>
</dbReference>
<dbReference type="GO" id="GO:0005102">
    <property type="term" value="F:signaling receptor binding"/>
    <property type="evidence" value="ECO:0000266"/>
    <property type="project" value="RGD"/>
</dbReference>
<dbReference type="GO" id="GO:0005198">
    <property type="term" value="F:structural molecule activity"/>
    <property type="evidence" value="ECO:0000314"/>
    <property type="project" value="UniProtKB"/>
</dbReference>
<dbReference type="GO" id="GO:0044325">
    <property type="term" value="F:transmembrane transporter binding"/>
    <property type="evidence" value="ECO:0000353"/>
    <property type="project" value="RGD"/>
</dbReference>
<dbReference type="GO" id="GO:0022829">
    <property type="term" value="F:wide pore channel activity"/>
    <property type="evidence" value="ECO:0000318"/>
    <property type="project" value="GO_Central"/>
</dbReference>
<dbReference type="GO" id="GO:0015867">
    <property type="term" value="P:ATP transport"/>
    <property type="evidence" value="ECO:0000250"/>
    <property type="project" value="UniProtKB"/>
</dbReference>
<dbReference type="GO" id="GO:0006816">
    <property type="term" value="P:calcium ion transport"/>
    <property type="evidence" value="ECO:0000250"/>
    <property type="project" value="UniProtKB"/>
</dbReference>
<dbReference type="GO" id="GO:0007267">
    <property type="term" value="P:cell-cell signaling"/>
    <property type="evidence" value="ECO:0000315"/>
    <property type="project" value="RGD"/>
</dbReference>
<dbReference type="GO" id="GO:0098656">
    <property type="term" value="P:monoatomic anion transmembrane transport"/>
    <property type="evidence" value="ECO:0000250"/>
    <property type="project" value="UniProtKB"/>
</dbReference>
<dbReference type="GO" id="GO:0006812">
    <property type="term" value="P:monoatomic cation transport"/>
    <property type="evidence" value="ECO:0000266"/>
    <property type="project" value="RGD"/>
</dbReference>
<dbReference type="GO" id="GO:0032730">
    <property type="term" value="P:positive regulation of interleukin-1 alpha production"/>
    <property type="evidence" value="ECO:0000266"/>
    <property type="project" value="RGD"/>
</dbReference>
<dbReference type="GO" id="GO:0032731">
    <property type="term" value="P:positive regulation of interleukin-1 beta production"/>
    <property type="evidence" value="ECO:0000266"/>
    <property type="project" value="RGD"/>
</dbReference>
<dbReference type="GO" id="GO:0060907">
    <property type="term" value="P:positive regulation of macrophage cytokine production"/>
    <property type="evidence" value="ECO:0000266"/>
    <property type="project" value="RGD"/>
</dbReference>
<dbReference type="GO" id="GO:0033198">
    <property type="term" value="P:response to ATP"/>
    <property type="evidence" value="ECO:0000266"/>
    <property type="project" value="RGD"/>
</dbReference>
<dbReference type="GO" id="GO:0002931">
    <property type="term" value="P:response to ischemia"/>
    <property type="evidence" value="ECO:0000266"/>
    <property type="project" value="RGD"/>
</dbReference>
<dbReference type="InterPro" id="IPR000990">
    <property type="entry name" value="Innexin"/>
</dbReference>
<dbReference type="InterPro" id="IPR039099">
    <property type="entry name" value="Pannexin"/>
</dbReference>
<dbReference type="PANTHER" id="PTHR15759">
    <property type="entry name" value="PANNEXIN"/>
    <property type="match status" value="1"/>
</dbReference>
<dbReference type="PANTHER" id="PTHR15759:SF5">
    <property type="entry name" value="PANNEXIN-1"/>
    <property type="match status" value="1"/>
</dbReference>
<dbReference type="Pfam" id="PF00876">
    <property type="entry name" value="Innexin"/>
    <property type="match status" value="1"/>
</dbReference>
<dbReference type="PROSITE" id="PS51013">
    <property type="entry name" value="PANNEXIN"/>
    <property type="match status" value="1"/>
</dbReference>
<proteinExistence type="evidence at protein level"/>
<protein>
    <recommendedName>
        <fullName>Pannexin-1</fullName>
    </recommendedName>
    <component>
        <recommendedName>
            <fullName evidence="2">Caspase-activated pannexin-1</fullName>
            <shortName evidence="8">Caspase-activated PANX1</shortName>
        </recommendedName>
    </component>
</protein>
<comment type="function">
    <text evidence="2 3">Ion channel involved in a variety of physiological functions such as blood pressure regulation, apoptotic cell clearance and oogenesis (By similarity). Forms anion-selective channels with relatively low conductance and an order of permeabilities: nitrate&gt;iodide&gt;chlroride&gt;&gt;aspartate=glutamate=gluconate (By similarity). Can release ATP upon activation through phosphorylation or cleavage at C-terminus. May play a role as a Ca(2+)-leak channel to regulate ER Ca(2+) homeostasis (By similarity).</text>
</comment>
<comment type="function">
    <molecule>Caspase-activated pannexin-1</molecule>
    <text evidence="2">During apoptosis, the C terminal tail is cleaved by caspases, which opens the main pore acting as a large-pore ATP efflux channel with a broad distribution, which allows the regulated release of molecules and ions smaller than 1 kDa, such as nucleotides ATP and UTP, and selective plasma membrane permeability to attract phagocytes that engulf the dying cells.</text>
</comment>
<comment type="catalytic activity">
    <reaction evidence="2">
        <text>Ca(2+)(in) = Ca(2+)(out)</text>
        <dbReference type="Rhea" id="RHEA:29671"/>
        <dbReference type="ChEBI" id="CHEBI:29108"/>
    </reaction>
</comment>
<comment type="catalytic activity">
    <reaction evidence="2">
        <text>ATP(in) = ATP(out)</text>
        <dbReference type="Rhea" id="RHEA:75687"/>
        <dbReference type="ChEBI" id="CHEBI:30616"/>
    </reaction>
</comment>
<comment type="catalytic activity">
    <reaction evidence="2">
        <text>K(+)(in) = K(+)(out)</text>
        <dbReference type="Rhea" id="RHEA:29463"/>
        <dbReference type="ChEBI" id="CHEBI:29103"/>
    </reaction>
</comment>
<comment type="catalytic activity">
    <reaction evidence="2">
        <text>chloride(in) = chloride(out)</text>
        <dbReference type="Rhea" id="RHEA:29823"/>
        <dbReference type="ChEBI" id="CHEBI:17996"/>
    </reaction>
</comment>
<comment type="catalytic activity">
    <reaction evidence="2">
        <text>iodide(out) = iodide(in)</text>
        <dbReference type="Rhea" id="RHEA:66324"/>
        <dbReference type="ChEBI" id="CHEBI:16382"/>
    </reaction>
</comment>
<comment type="catalytic activity">
    <reaction evidence="2">
        <text>Na(+)(in) = Na(+)(out)</text>
        <dbReference type="Rhea" id="RHEA:34963"/>
        <dbReference type="ChEBI" id="CHEBI:29101"/>
    </reaction>
</comment>
<comment type="catalytic activity">
    <reaction evidence="3">
        <text>nitrate(in) = nitrate(out)</text>
        <dbReference type="Rhea" id="RHEA:34923"/>
        <dbReference type="ChEBI" id="CHEBI:17632"/>
    </reaction>
</comment>
<comment type="catalytic activity">
    <reaction evidence="3">
        <text>L-aspartate(out) = L-aspartate(in)</text>
        <dbReference type="Rhea" id="RHEA:66332"/>
        <dbReference type="ChEBI" id="CHEBI:29991"/>
    </reaction>
</comment>
<comment type="catalytic activity">
    <reaction evidence="3">
        <text>L-glutamate(out) = L-glutamate(in)</text>
        <dbReference type="Rhea" id="RHEA:66336"/>
        <dbReference type="ChEBI" id="CHEBI:29985"/>
    </reaction>
</comment>
<comment type="catalytic activity">
    <reaction evidence="3">
        <text>D-gluconate(in) = D-gluconate(out)</text>
        <dbReference type="Rhea" id="RHEA:76139"/>
        <dbReference type="ChEBI" id="CHEBI:18391"/>
    </reaction>
</comment>
<comment type="catalytic activity">
    <molecule>Caspase-activated pannexin-1</molecule>
    <reaction evidence="2">
        <text>spermidine(in) = spermidine(out)</text>
        <dbReference type="Rhea" id="RHEA:35039"/>
        <dbReference type="ChEBI" id="CHEBI:57834"/>
    </reaction>
</comment>
<comment type="catalytic activity">
    <molecule>Caspase-activated pannexin-1</molecule>
    <reaction evidence="2">
        <text>ATP(in) = ATP(out)</text>
        <dbReference type="Rhea" id="RHEA:75687"/>
        <dbReference type="ChEBI" id="CHEBI:30616"/>
    </reaction>
</comment>
<comment type="subunit">
    <text evidence="9">Homoheptameric.</text>
</comment>
<comment type="subcellular location">
    <subcellularLocation>
        <location evidence="2">Cell membrane</location>
        <topology evidence="5">Multi-pass membrane protein</topology>
    </subcellularLocation>
    <subcellularLocation>
        <location evidence="2">Endoplasmic reticulum membrane</location>
        <topology evidence="5">Multi-pass membrane protein</topology>
    </subcellularLocation>
</comment>
<comment type="tissue specificity">
    <text evidence="7">Expressed in the eye, thyroid, prostate, kidney and liver. Abundantly expressed in the CNS, including hippocampus, olfactory bulb, cortex, cerebellum and white matter.</text>
</comment>
<comment type="PTM">
    <text evidence="1">S-nitrosylation inhibits channel currents and ATP release.</text>
</comment>
<comment type="PTM">
    <text evidence="2">N-glycosylation plays a role in cell surface targeting. Glycosylation at its extracellular surface makes unlikely that two oligomers could dock to form an intercellular channel such as in gap junctions. Exists in three glycosylation states: non-glycosylated (GLY0), high-mannose glycosylated (GLY1), and fully mature glycosylated (GLY2).</text>
</comment>
<comment type="PTM">
    <text evidence="2">Cleaved by CASP3 and CASP7 during apoptosis. Cleavage opens the channel for the release of metabolites and induces plasma membrane permeability during apoptosis.</text>
</comment>
<comment type="PTM">
    <text evidence="2">Phosphorylated at Tyr-198 by SRC. Phosphorylation activates ATP release. Constitutively phosphorylated in vascular smooth muscle cells.</text>
</comment>
<comment type="similarity">
    <text evidence="5">Belongs to the pannexin family.</text>
</comment>
<reference key="1">
    <citation type="journal article" date="2003" name="Proc. Natl. Acad. Sci. U.S.A.">
        <title>Pannexins, a family of gap junction proteins expressed in brain.</title>
        <authorList>
            <person name="Bruzzone R."/>
            <person name="Hormuzdi S.G."/>
            <person name="Barbe M."/>
            <person name="Herb A."/>
            <person name="Monyer H."/>
        </authorList>
    </citation>
    <scope>NUCLEOTIDE SEQUENCE [MRNA]</scope>
    <scope>TISSUE SPECIFICITY</scope>
    <scope>SUBUNIT</scope>
    <source>
        <strain>Wistar</strain>
        <tissue>Hippocampus</tissue>
    </source>
</reference>
<accession>P60570</accession>
<feature type="chain" id="PRO_0000208487" description="Pannexin-1">
    <location>
        <begin position="1"/>
        <end position="426"/>
    </location>
</feature>
<feature type="chain" id="PRO_0000460044" description="Caspase-activated pannexin-1" evidence="2">
    <location>
        <begin position="1"/>
        <end position="378"/>
    </location>
</feature>
<feature type="topological domain" description="Cytoplasmic" evidence="4">
    <location>
        <begin position="1"/>
        <end position="40"/>
    </location>
</feature>
<feature type="transmembrane region" description="Helical" evidence="5">
    <location>
        <begin position="41"/>
        <end position="61"/>
    </location>
</feature>
<feature type="topological domain" description="Extracellular" evidence="4">
    <location>
        <begin position="62"/>
        <end position="106"/>
    </location>
</feature>
<feature type="transmembrane region" description="Helical" evidence="5">
    <location>
        <begin position="107"/>
        <end position="127"/>
    </location>
</feature>
<feature type="topological domain" description="Cytoplasmic" evidence="4">
    <location>
        <begin position="128"/>
        <end position="216"/>
    </location>
</feature>
<feature type="transmembrane region" description="Helical" evidence="5">
    <location>
        <begin position="217"/>
        <end position="237"/>
    </location>
</feature>
<feature type="topological domain" description="Extracellular" evidence="4">
    <location>
        <begin position="238"/>
        <end position="277"/>
    </location>
</feature>
<feature type="transmembrane region" description="Helical" evidence="5">
    <location>
        <begin position="278"/>
        <end position="298"/>
    </location>
</feature>
<feature type="topological domain" description="Cytoplasmic" evidence="4">
    <location>
        <begin position="299"/>
        <end position="426"/>
    </location>
</feature>
<feature type="region of interest" description="Disordered" evidence="6">
    <location>
        <begin position="407"/>
        <end position="426"/>
    </location>
</feature>
<feature type="site" description="Cleavage; by CASP3 or CASP7" evidence="2">
    <location>
        <begin position="375"/>
        <end position="378"/>
    </location>
</feature>
<feature type="modified residue" description="S-nitrosocysteine" evidence="3">
    <location>
        <position position="40"/>
    </location>
</feature>
<feature type="modified residue" description="Phosphotyrosine" evidence="3">
    <location>
        <position position="198"/>
    </location>
</feature>
<feature type="modified residue" description="S-nitrosocysteine" evidence="3">
    <location>
        <position position="346"/>
    </location>
</feature>
<feature type="glycosylation site" description="N-linked (GlcNAc...) asparagine" evidence="4">
    <location>
        <position position="254"/>
    </location>
</feature>
<feature type="disulfide bond" evidence="2">
    <location>
        <begin position="66"/>
        <end position="264"/>
    </location>
</feature>
<feature type="disulfide bond" evidence="2">
    <location>
        <begin position="84"/>
        <end position="245"/>
    </location>
</feature>